<proteinExistence type="evidence at protein level"/>
<gene>
    <name type="primary">ybhN</name>
    <name type="ordered locus">b0788</name>
    <name type="ordered locus">JW0771</name>
</gene>
<dbReference type="EMBL" id="U00096">
    <property type="protein sequence ID" value="AAC73875.1"/>
    <property type="molecule type" value="Genomic_DNA"/>
</dbReference>
<dbReference type="EMBL" id="AP009048">
    <property type="protein sequence ID" value="BAA35447.1"/>
    <property type="molecule type" value="Genomic_DNA"/>
</dbReference>
<dbReference type="PIR" id="D64815">
    <property type="entry name" value="D64815"/>
</dbReference>
<dbReference type="RefSeq" id="NP_415309.1">
    <property type="nucleotide sequence ID" value="NC_000913.3"/>
</dbReference>
<dbReference type="RefSeq" id="WP_000045450.1">
    <property type="nucleotide sequence ID" value="NZ_SSZK01000002.1"/>
</dbReference>
<dbReference type="SMR" id="P75770"/>
<dbReference type="BioGRID" id="4259655">
    <property type="interactions" value="7"/>
</dbReference>
<dbReference type="FunCoup" id="P75770">
    <property type="interactions" value="179"/>
</dbReference>
<dbReference type="STRING" id="511145.b0788"/>
<dbReference type="TCDB" id="4.D.2.4.3">
    <property type="family name" value="the glycosyl transferase 2 (gt2) family"/>
</dbReference>
<dbReference type="PaxDb" id="511145-b0788"/>
<dbReference type="EnsemblBacteria" id="AAC73875">
    <property type="protein sequence ID" value="AAC73875"/>
    <property type="gene ID" value="b0788"/>
</dbReference>
<dbReference type="GeneID" id="945410"/>
<dbReference type="KEGG" id="ecj:JW0771"/>
<dbReference type="KEGG" id="eco:b0788"/>
<dbReference type="KEGG" id="ecoc:C3026_04990"/>
<dbReference type="PATRIC" id="fig|1411691.4.peg.1490"/>
<dbReference type="EchoBASE" id="EB3434"/>
<dbReference type="eggNOG" id="COG0392">
    <property type="taxonomic scope" value="Bacteria"/>
</dbReference>
<dbReference type="HOGENOM" id="CLU_056539_1_0_6"/>
<dbReference type="InParanoid" id="P75770"/>
<dbReference type="OMA" id="VWKVIRN"/>
<dbReference type="OrthoDB" id="5998304at2"/>
<dbReference type="PhylomeDB" id="P75770"/>
<dbReference type="BioCyc" id="EcoCyc:G6405-MONOMER"/>
<dbReference type="PRO" id="PR:P75770"/>
<dbReference type="Proteomes" id="UP000000625">
    <property type="component" value="Chromosome"/>
</dbReference>
<dbReference type="GO" id="GO:0005886">
    <property type="term" value="C:plasma membrane"/>
    <property type="evidence" value="ECO:0000314"/>
    <property type="project" value="EcoCyc"/>
</dbReference>
<dbReference type="InterPro" id="IPR022791">
    <property type="entry name" value="L-PG_synthase/AglD"/>
</dbReference>
<dbReference type="PANTHER" id="PTHR39087">
    <property type="entry name" value="UPF0104 MEMBRANE PROTEIN MJ1595"/>
    <property type="match status" value="1"/>
</dbReference>
<dbReference type="PANTHER" id="PTHR39087:SF2">
    <property type="entry name" value="UPF0104 MEMBRANE PROTEIN MJ1595"/>
    <property type="match status" value="1"/>
</dbReference>
<dbReference type="Pfam" id="PF03706">
    <property type="entry name" value="LPG_synthase_TM"/>
    <property type="match status" value="1"/>
</dbReference>
<protein>
    <recommendedName>
        <fullName>Inner membrane protein YbhN</fullName>
    </recommendedName>
</protein>
<keyword id="KW-0997">Cell inner membrane</keyword>
<keyword id="KW-1003">Cell membrane</keyword>
<keyword id="KW-0472">Membrane</keyword>
<keyword id="KW-1185">Reference proteome</keyword>
<keyword id="KW-0812">Transmembrane</keyword>
<keyword id="KW-1133">Transmembrane helix</keyword>
<comment type="subcellular location">
    <subcellularLocation>
        <location>Cell inner membrane</location>
        <topology>Multi-pass membrane protein</topology>
    </subcellularLocation>
</comment>
<comment type="similarity">
    <text evidence="2">To Synechocystis PCC 6803 slr0712.</text>
</comment>
<evidence type="ECO:0000255" key="1"/>
<evidence type="ECO:0000305" key="2"/>
<sequence>MSKSHPRWRLAKKILTWLFFIAVIVLLVVYAKKVDWEEVWKVIRDYNRVALLSAVGLVVVSYLIYGCYDLLARFYCGHKLAKRQVMLVSFICYAFNLTLSTWVGGIGMRYRLYSRLGLPGSTITRIFSLSITTNWLGYILLAGIIFTAGVVELPDHWYVDQTTLRILGIGLLMIIAVYLWFCAFAKHRHMTIKGQKLVLPSWKFALAQMLISSVNWMVMGAIIWLLLGQSVNYFFVLGVLLVSSIAGVIVHIPAGIGVLEAVFIALLAGEHTSKGTIIAALLAYRVLYYFIPLLLALICYLLLESQAKKLRAKNEAAM</sequence>
<accession>P75770</accession>
<reference key="1">
    <citation type="journal article" date="1996" name="DNA Res.">
        <title>A 718-kb DNA sequence of the Escherichia coli K-12 genome corresponding to the 12.7-28.0 min region on the linkage map.</title>
        <authorList>
            <person name="Oshima T."/>
            <person name="Aiba H."/>
            <person name="Baba T."/>
            <person name="Fujita K."/>
            <person name="Hayashi K."/>
            <person name="Honjo A."/>
            <person name="Ikemoto K."/>
            <person name="Inada T."/>
            <person name="Itoh T."/>
            <person name="Kajihara M."/>
            <person name="Kanai K."/>
            <person name="Kashimoto K."/>
            <person name="Kimura S."/>
            <person name="Kitagawa M."/>
            <person name="Makino K."/>
            <person name="Masuda S."/>
            <person name="Miki T."/>
            <person name="Mizobuchi K."/>
            <person name="Mori H."/>
            <person name="Motomura K."/>
            <person name="Nakamura Y."/>
            <person name="Nashimoto H."/>
            <person name="Nishio Y."/>
            <person name="Saito N."/>
            <person name="Sampei G."/>
            <person name="Seki Y."/>
            <person name="Tagami H."/>
            <person name="Takemoto K."/>
            <person name="Wada C."/>
            <person name="Yamamoto Y."/>
            <person name="Yano M."/>
            <person name="Horiuchi T."/>
        </authorList>
    </citation>
    <scope>NUCLEOTIDE SEQUENCE [LARGE SCALE GENOMIC DNA]</scope>
    <source>
        <strain>K12 / W3110 / ATCC 27325 / DSM 5911</strain>
    </source>
</reference>
<reference key="2">
    <citation type="journal article" date="1997" name="Science">
        <title>The complete genome sequence of Escherichia coli K-12.</title>
        <authorList>
            <person name="Blattner F.R."/>
            <person name="Plunkett G. III"/>
            <person name="Bloch C.A."/>
            <person name="Perna N.T."/>
            <person name="Burland V."/>
            <person name="Riley M."/>
            <person name="Collado-Vides J."/>
            <person name="Glasner J.D."/>
            <person name="Rode C.K."/>
            <person name="Mayhew G.F."/>
            <person name="Gregor J."/>
            <person name="Davis N.W."/>
            <person name="Kirkpatrick H.A."/>
            <person name="Goeden M.A."/>
            <person name="Rose D.J."/>
            <person name="Mau B."/>
            <person name="Shao Y."/>
        </authorList>
    </citation>
    <scope>NUCLEOTIDE SEQUENCE [LARGE SCALE GENOMIC DNA]</scope>
    <source>
        <strain>K12 / MG1655 / ATCC 47076</strain>
    </source>
</reference>
<reference key="3">
    <citation type="journal article" date="2006" name="Mol. Syst. Biol.">
        <title>Highly accurate genome sequences of Escherichia coli K-12 strains MG1655 and W3110.</title>
        <authorList>
            <person name="Hayashi K."/>
            <person name="Morooka N."/>
            <person name="Yamamoto Y."/>
            <person name="Fujita K."/>
            <person name="Isono K."/>
            <person name="Choi S."/>
            <person name="Ohtsubo E."/>
            <person name="Baba T."/>
            <person name="Wanner B.L."/>
            <person name="Mori H."/>
            <person name="Horiuchi T."/>
        </authorList>
    </citation>
    <scope>NUCLEOTIDE SEQUENCE [LARGE SCALE GENOMIC DNA]</scope>
    <source>
        <strain>K12 / W3110 / ATCC 27325 / DSM 5911</strain>
    </source>
</reference>
<reference key="4">
    <citation type="journal article" date="2005" name="Science">
        <title>Global topology analysis of the Escherichia coli inner membrane proteome.</title>
        <authorList>
            <person name="Daley D.O."/>
            <person name="Rapp M."/>
            <person name="Granseth E."/>
            <person name="Melen K."/>
            <person name="Drew D."/>
            <person name="von Heijne G."/>
        </authorList>
    </citation>
    <scope>TOPOLOGY [LARGE SCALE ANALYSIS]</scope>
    <source>
        <strain>K12 / MG1655 / ATCC 47076</strain>
    </source>
</reference>
<name>YBHN_ECOLI</name>
<organism>
    <name type="scientific">Escherichia coli (strain K12)</name>
    <dbReference type="NCBI Taxonomy" id="83333"/>
    <lineage>
        <taxon>Bacteria</taxon>
        <taxon>Pseudomonadati</taxon>
        <taxon>Pseudomonadota</taxon>
        <taxon>Gammaproteobacteria</taxon>
        <taxon>Enterobacterales</taxon>
        <taxon>Enterobacteriaceae</taxon>
        <taxon>Escherichia</taxon>
    </lineage>
</organism>
<feature type="chain" id="PRO_0000168715" description="Inner membrane protein YbhN">
    <location>
        <begin position="1"/>
        <end position="318"/>
    </location>
</feature>
<feature type="topological domain" description="Periplasmic" evidence="1">
    <location>
        <begin position="1"/>
        <end position="13"/>
    </location>
</feature>
<feature type="transmembrane region" description="Helical" evidence="1">
    <location>
        <begin position="14"/>
        <end position="34"/>
    </location>
</feature>
<feature type="topological domain" description="Cytoplasmic" evidence="1">
    <location>
        <begin position="35"/>
        <end position="50"/>
    </location>
</feature>
<feature type="transmembrane region" description="Helical" evidence="1">
    <location>
        <begin position="51"/>
        <end position="71"/>
    </location>
</feature>
<feature type="topological domain" description="Periplasmic" evidence="1">
    <location>
        <begin position="72"/>
        <end position="85"/>
    </location>
</feature>
<feature type="transmembrane region" description="Helical" evidence="1">
    <location>
        <begin position="86"/>
        <end position="106"/>
    </location>
</feature>
<feature type="topological domain" description="Cytoplasmic" evidence="1">
    <location>
        <begin position="107"/>
        <end position="125"/>
    </location>
</feature>
<feature type="transmembrane region" description="Helical" evidence="1">
    <location>
        <begin position="126"/>
        <end position="146"/>
    </location>
</feature>
<feature type="topological domain" description="Periplasmic" evidence="1">
    <location>
        <begin position="147"/>
        <end position="165"/>
    </location>
</feature>
<feature type="transmembrane region" description="Helical" evidence="1">
    <location>
        <begin position="166"/>
        <end position="186"/>
    </location>
</feature>
<feature type="topological domain" description="Cytoplasmic" evidence="1">
    <location>
        <begin position="187"/>
        <end position="205"/>
    </location>
</feature>
<feature type="transmembrane region" description="Helical" evidence="1">
    <location>
        <begin position="206"/>
        <end position="226"/>
    </location>
</feature>
<feature type="topological domain" description="Periplasmic" evidence="1">
    <location>
        <begin position="227"/>
        <end position="233"/>
    </location>
</feature>
<feature type="transmembrane region" description="Helical" evidence="1">
    <location>
        <begin position="234"/>
        <end position="254"/>
    </location>
</feature>
<feature type="transmembrane region" description="Helical" evidence="1">
    <location>
        <begin position="255"/>
        <end position="275"/>
    </location>
</feature>
<feature type="topological domain" description="Periplasmic" evidence="1">
    <location>
        <begin position="276"/>
        <end position="277"/>
    </location>
</feature>
<feature type="transmembrane region" description="Helical" evidence="1">
    <location>
        <begin position="278"/>
        <end position="298"/>
    </location>
</feature>
<feature type="topological domain" description="Cytoplasmic" evidence="1">
    <location>
        <begin position="299"/>
        <end position="318"/>
    </location>
</feature>